<reference key="1">
    <citation type="journal article" date="1999" name="Development">
        <title>Zebrafish sparse corresponds to an orthologue of c-kit and is required for the morphogenesis of a subpopulation of melanocytes, but is not essential for hematopoiesis or primordial germ cell development.</title>
        <authorList>
            <person name="Parichy D.M."/>
            <person name="Rawls J.F."/>
            <person name="Pratt S.J."/>
            <person name="Whitfield T.T."/>
            <person name="Johnson S.L."/>
        </authorList>
    </citation>
    <scope>NUCLEOTIDE SEQUENCE [MRNA]</scope>
    <scope>FUNCTION</scope>
    <scope>TISSUE SPECIFICITY</scope>
    <scope>DISRUPTION PHENOTYPE</scope>
</reference>
<reference key="2">
    <citation type="journal article" date="2013" name="Nature">
        <title>The zebrafish reference genome sequence and its relationship to the human genome.</title>
        <authorList>
            <person name="Howe K."/>
            <person name="Clark M.D."/>
            <person name="Torroja C.F."/>
            <person name="Torrance J."/>
            <person name="Berthelot C."/>
            <person name="Muffato M."/>
            <person name="Collins J.E."/>
            <person name="Humphray S."/>
            <person name="McLaren K."/>
            <person name="Matthews L."/>
            <person name="McLaren S."/>
            <person name="Sealy I."/>
            <person name="Caccamo M."/>
            <person name="Churcher C."/>
            <person name="Scott C."/>
            <person name="Barrett J.C."/>
            <person name="Koch R."/>
            <person name="Rauch G.J."/>
            <person name="White S."/>
            <person name="Chow W."/>
            <person name="Kilian B."/>
            <person name="Quintais L.T."/>
            <person name="Guerra-Assuncao J.A."/>
            <person name="Zhou Y."/>
            <person name="Gu Y."/>
            <person name="Yen J."/>
            <person name="Vogel J.H."/>
            <person name="Eyre T."/>
            <person name="Redmond S."/>
            <person name="Banerjee R."/>
            <person name="Chi J."/>
            <person name="Fu B."/>
            <person name="Langley E."/>
            <person name="Maguire S.F."/>
            <person name="Laird G.K."/>
            <person name="Lloyd D."/>
            <person name="Kenyon E."/>
            <person name="Donaldson S."/>
            <person name="Sehra H."/>
            <person name="Almeida-King J."/>
            <person name="Loveland J."/>
            <person name="Trevanion S."/>
            <person name="Jones M."/>
            <person name="Quail M."/>
            <person name="Willey D."/>
            <person name="Hunt A."/>
            <person name="Burton J."/>
            <person name="Sims S."/>
            <person name="McLay K."/>
            <person name="Plumb B."/>
            <person name="Davis J."/>
            <person name="Clee C."/>
            <person name="Oliver K."/>
            <person name="Clark R."/>
            <person name="Riddle C."/>
            <person name="Elliot D."/>
            <person name="Threadgold G."/>
            <person name="Harden G."/>
            <person name="Ware D."/>
            <person name="Begum S."/>
            <person name="Mortimore B."/>
            <person name="Kerry G."/>
            <person name="Heath P."/>
            <person name="Phillimore B."/>
            <person name="Tracey A."/>
            <person name="Corby N."/>
            <person name="Dunn M."/>
            <person name="Johnson C."/>
            <person name="Wood J."/>
            <person name="Clark S."/>
            <person name="Pelan S."/>
            <person name="Griffiths G."/>
            <person name="Smith M."/>
            <person name="Glithero R."/>
            <person name="Howden P."/>
            <person name="Barker N."/>
            <person name="Lloyd C."/>
            <person name="Stevens C."/>
            <person name="Harley J."/>
            <person name="Holt K."/>
            <person name="Panagiotidis G."/>
            <person name="Lovell J."/>
            <person name="Beasley H."/>
            <person name="Henderson C."/>
            <person name="Gordon D."/>
            <person name="Auger K."/>
            <person name="Wright D."/>
            <person name="Collins J."/>
            <person name="Raisen C."/>
            <person name="Dyer L."/>
            <person name="Leung K."/>
            <person name="Robertson L."/>
            <person name="Ambridge K."/>
            <person name="Leongamornlert D."/>
            <person name="McGuire S."/>
            <person name="Gilderthorp R."/>
            <person name="Griffiths C."/>
            <person name="Manthravadi D."/>
            <person name="Nichol S."/>
            <person name="Barker G."/>
            <person name="Whitehead S."/>
            <person name="Kay M."/>
            <person name="Brown J."/>
            <person name="Murnane C."/>
            <person name="Gray E."/>
            <person name="Humphries M."/>
            <person name="Sycamore N."/>
            <person name="Barker D."/>
            <person name="Saunders D."/>
            <person name="Wallis J."/>
            <person name="Babbage A."/>
            <person name="Hammond S."/>
            <person name="Mashreghi-Mohammadi M."/>
            <person name="Barr L."/>
            <person name="Martin S."/>
            <person name="Wray P."/>
            <person name="Ellington A."/>
            <person name="Matthews N."/>
            <person name="Ellwood M."/>
            <person name="Woodmansey R."/>
            <person name="Clark G."/>
            <person name="Cooper J."/>
            <person name="Tromans A."/>
            <person name="Grafham D."/>
            <person name="Skuce C."/>
            <person name="Pandian R."/>
            <person name="Andrews R."/>
            <person name="Harrison E."/>
            <person name="Kimberley A."/>
            <person name="Garnett J."/>
            <person name="Fosker N."/>
            <person name="Hall R."/>
            <person name="Garner P."/>
            <person name="Kelly D."/>
            <person name="Bird C."/>
            <person name="Palmer S."/>
            <person name="Gehring I."/>
            <person name="Berger A."/>
            <person name="Dooley C.M."/>
            <person name="Ersan-Urun Z."/>
            <person name="Eser C."/>
            <person name="Geiger H."/>
            <person name="Geisler M."/>
            <person name="Karotki L."/>
            <person name="Kirn A."/>
            <person name="Konantz J."/>
            <person name="Konantz M."/>
            <person name="Oberlander M."/>
            <person name="Rudolph-Geiger S."/>
            <person name="Teucke M."/>
            <person name="Lanz C."/>
            <person name="Raddatz G."/>
            <person name="Osoegawa K."/>
            <person name="Zhu B."/>
            <person name="Rapp A."/>
            <person name="Widaa S."/>
            <person name="Langford C."/>
            <person name="Yang F."/>
            <person name="Schuster S.C."/>
            <person name="Carter N.P."/>
            <person name="Harrow J."/>
            <person name="Ning Z."/>
            <person name="Herrero J."/>
            <person name="Searle S.M."/>
            <person name="Enright A."/>
            <person name="Geisler R."/>
            <person name="Plasterk R.H."/>
            <person name="Lee C."/>
            <person name="Westerfield M."/>
            <person name="de Jong P.J."/>
            <person name="Zon L.I."/>
            <person name="Postlethwait J.H."/>
            <person name="Nusslein-Volhard C."/>
            <person name="Hubbard T.J."/>
            <person name="Roest Crollius H."/>
            <person name="Rogers J."/>
            <person name="Stemple D.L."/>
        </authorList>
    </citation>
    <scope>NUCLEOTIDE SEQUENCE [LARGE SCALE GENOMIC DNA]</scope>
    <source>
        <strain>Tuebingen</strain>
    </source>
</reference>
<keyword id="KW-0067">ATP-binding</keyword>
<keyword id="KW-1003">Cell membrane</keyword>
<keyword id="KW-0221">Differentiation</keyword>
<keyword id="KW-1015">Disulfide bond</keyword>
<keyword id="KW-0325">Glycoprotein</keyword>
<keyword id="KW-0393">Immunoglobulin domain</keyword>
<keyword id="KW-0418">Kinase</keyword>
<keyword id="KW-0460">Magnesium</keyword>
<keyword id="KW-0472">Membrane</keyword>
<keyword id="KW-0479">Metal-binding</keyword>
<keyword id="KW-0547">Nucleotide-binding</keyword>
<keyword id="KW-0597">Phosphoprotein</keyword>
<keyword id="KW-0675">Receptor</keyword>
<keyword id="KW-1185">Reference proteome</keyword>
<keyword id="KW-0677">Repeat</keyword>
<keyword id="KW-0732">Signal</keyword>
<keyword id="KW-0808">Transferase</keyword>
<keyword id="KW-0812">Transmembrane</keyword>
<keyword id="KW-1133">Transmembrane helix</keyword>
<keyword id="KW-0829">Tyrosine-protein kinase</keyword>
<keyword id="KW-0832">Ubl conjugation</keyword>
<feature type="signal peptide" evidence="2">
    <location>
        <begin position="1"/>
        <end position="21"/>
    </location>
</feature>
<feature type="chain" id="PRO_0000248880" description="Mast/stem cell growth factor receptor kita">
    <location>
        <begin position="22"/>
        <end position="976"/>
    </location>
</feature>
<feature type="topological domain" description="Extracellular" evidence="2">
    <location>
        <begin position="22"/>
        <end position="515"/>
    </location>
</feature>
<feature type="transmembrane region" description="Helical" evidence="2">
    <location>
        <begin position="516"/>
        <end position="536"/>
    </location>
</feature>
<feature type="topological domain" description="Cytoplasmic" evidence="2">
    <location>
        <begin position="537"/>
        <end position="976"/>
    </location>
</feature>
<feature type="domain" description="Ig-like C2-type 1">
    <location>
        <begin position="23"/>
        <end position="105"/>
    </location>
</feature>
<feature type="domain" description="Ig-like C2-type 2">
    <location>
        <begin position="100"/>
        <end position="199"/>
    </location>
</feature>
<feature type="domain" description="Ig-like C2-type 3">
    <location>
        <begin position="206"/>
        <end position="301"/>
    </location>
</feature>
<feature type="domain" description="Ig-like C2-type 4">
    <location>
        <begin position="308"/>
        <end position="402"/>
    </location>
</feature>
<feature type="domain" description="Ig-like C2-type 5">
    <location>
        <begin position="399"/>
        <end position="504"/>
    </location>
</feature>
<feature type="domain" description="Protein kinase" evidence="4">
    <location>
        <begin position="580"/>
        <end position="922"/>
    </location>
</feature>
<feature type="region of interest" description="Disordered" evidence="6">
    <location>
        <begin position="929"/>
        <end position="976"/>
    </location>
</feature>
<feature type="compositionally biased region" description="Polar residues" evidence="6">
    <location>
        <begin position="947"/>
        <end position="976"/>
    </location>
</feature>
<feature type="active site" description="Proton acceptor" evidence="4 5">
    <location>
        <position position="777"/>
    </location>
</feature>
<feature type="binding site" evidence="1">
    <location>
        <position position="559"/>
    </location>
    <ligand>
        <name>Mg(2+)</name>
        <dbReference type="ChEBI" id="CHEBI:18420"/>
    </ligand>
</feature>
<feature type="binding site" evidence="4">
    <location>
        <begin position="587"/>
        <end position="594"/>
    </location>
    <ligand>
        <name>ATP</name>
        <dbReference type="ChEBI" id="CHEBI:30616"/>
    </ligand>
</feature>
<feature type="binding site" evidence="4">
    <location>
        <position position="614"/>
    </location>
    <ligand>
        <name>ATP</name>
        <dbReference type="ChEBI" id="CHEBI:30616"/>
    </ligand>
</feature>
<feature type="binding site" evidence="4">
    <location>
        <begin position="662"/>
        <end position="668"/>
    </location>
    <ligand>
        <name>ATP</name>
        <dbReference type="ChEBI" id="CHEBI:30616"/>
    </ligand>
</feature>
<feature type="binding site" evidence="4">
    <location>
        <position position="781"/>
    </location>
    <ligand>
        <name>ATP</name>
        <dbReference type="ChEBI" id="CHEBI:30616"/>
    </ligand>
</feature>
<feature type="binding site" evidence="1">
    <location>
        <position position="782"/>
    </location>
    <ligand>
        <name>Mg(2+)</name>
        <dbReference type="ChEBI" id="CHEBI:18420"/>
    </ligand>
</feature>
<feature type="binding site" evidence="1">
    <location>
        <position position="795"/>
    </location>
    <ligand>
        <name>Mg(2+)</name>
        <dbReference type="ChEBI" id="CHEBI:18420"/>
    </ligand>
</feature>
<feature type="modified residue" description="Phosphotyrosine; by autocatalysis" evidence="1">
    <location>
        <position position="559"/>
    </location>
</feature>
<feature type="modified residue" description="Phosphotyrosine; by autocatalysis" evidence="1">
    <location>
        <position position="561"/>
    </location>
</feature>
<feature type="modified residue" description="Phosphotyrosine; by autocatalysis" evidence="1">
    <location>
        <position position="691"/>
    </location>
</feature>
<feature type="modified residue" description="Phosphotyrosine; by autocatalysis" evidence="1">
    <location>
        <position position="707"/>
    </location>
</feature>
<feature type="modified residue" description="Phosphotyrosine; by autocatalysis" evidence="1">
    <location>
        <position position="808"/>
    </location>
</feature>
<feature type="modified residue" description="Phosphotyrosine; by autocatalysis" evidence="1">
    <location>
        <position position="921"/>
    </location>
</feature>
<feature type="glycosylation site" description="N-linked (GlcNAc...) asparagine" evidence="2">
    <location>
        <position position="39"/>
    </location>
</feature>
<feature type="glycosylation site" description="N-linked (GlcNAc...) asparagine" evidence="2">
    <location>
        <position position="47"/>
    </location>
</feature>
<feature type="glycosylation site" description="N-linked (GlcNAc...) asparagine" evidence="2">
    <location>
        <position position="282"/>
    </location>
</feature>
<feature type="glycosylation site" description="N-linked (GlcNAc...) asparagine" evidence="2">
    <location>
        <position position="309"/>
    </location>
</feature>
<feature type="glycosylation site" description="N-linked (GlcNAc...) asparagine" evidence="2">
    <location>
        <position position="315"/>
    </location>
</feature>
<feature type="glycosylation site" description="N-linked (GlcNAc...) asparagine" evidence="2">
    <location>
        <position position="352"/>
    </location>
</feature>
<feature type="glycosylation site" description="N-linked (GlcNAc...) asparagine" evidence="2">
    <location>
        <position position="449"/>
    </location>
</feature>
<feature type="glycosylation site" description="N-linked (GlcNAc...) asparagine" evidence="2">
    <location>
        <position position="477"/>
    </location>
</feature>
<feature type="disulfide bond" evidence="3">
    <location>
        <begin position="44"/>
        <end position="89"/>
    </location>
</feature>
<feature type="disulfide bond" evidence="3">
    <location>
        <begin position="131"/>
        <end position="180"/>
    </location>
</feature>
<feature type="disulfide bond" evidence="3">
    <location>
        <begin position="146"/>
        <end position="177"/>
    </location>
</feature>
<feature type="disulfide bond" evidence="3">
    <location>
        <begin position="228"/>
        <end position="285"/>
    </location>
</feature>
<feature type="disulfide bond" evidence="3">
    <location>
        <begin position="422"/>
        <end position="488"/>
    </location>
</feature>
<feature type="sequence conflict" description="In Ref. 1; AAD41890." evidence="8" ref="1">
    <original>E</original>
    <variation>Q</variation>
    <location>
        <position position="168"/>
    </location>
</feature>
<feature type="sequence conflict" description="In Ref. 2; CAD43458/CAI11525." evidence="8" ref="2">
    <original>V</original>
    <variation>L</variation>
    <location>
        <position position="460"/>
    </location>
</feature>
<sequence>MEYHCVLFTVLLQLIIQPGRSRPTITPEGPRLTVPLYSNFSLHCQSNSTVRWQHENRPMRTLKEEQRQGQQTILKVNRAGPQHLGKYSCREEKTGEKSSIYVYVKDPENPFRRTIVFDIVAAEGDTTVIPCLATDPDMKNLNLQKCDGQPLPNSLRYSASLETGVSVEKVRKEFEGCYVCVGTLDAATVKSGRYQLTVRLVPDAPPPITLGQPQRVLLTQGEKLSLSCSTSNVNSDIAVKWKAPNGVNPSVHQNSHLLTEPITHVRTAILSLSSVTMQDAGNYSCEAINEKGTTAKPVWVNIYEKGFINITSVDNSTRRVRAGESLSLRVVMNAYPKPHTFSWSYSGVKLTNTTDHVITSRTHGNSYTSELKLVRLKVSESGIYTFSCLNRDATIRQTFEVHVISKPQIVSYEGPIDGQVRCVAEGYPTPQIKWYYCDLPHSRCSNLLNATQEEEDVVTVTMTNPPFGKGAVESRLNITKNNYATLECVASANGEIVYTLFSISENTVPHELFTPLLIGFVAAAVILVLILIVLTYKYMQKPKYQIQWKVIEGIHGNNYVYIDPTQLPYDHQWEFPRDKLRFGKTLGSGAFGKVVEATAYGMSKADTVMTVAVKMLKPSAHATEKEALMSELKVLSYLGNHINIVNLLGACTVGGPTLVITEYCCFGDLLNFLRRRRVYFYYTTLGEDAYYRNVMMQSEPNDSRNGYMTMKPSVLGILSSENRRSLNKGDSYSDSDAVSEILQEDGLTLDTEDLLSFSYQVAKGMDFLASKNCIHRDLAARNILLTQGRVAKICDFGLARDITTDSNYVVKGNARLPVKWMSPESIFECVYTFESDVWSYGILLWEIFSLGSSPYPGMPVDSKFYKMIKEGYRMESPEFSPSEMYDIMHSCWDADPVKRPSFSKIVEKIEQQISDSTKHIYLNFSSRLPAAPGPREESSSHVHRLNSVGSHSTATQPLLSSNDVFLDRSSPSHPVV</sequence>
<proteinExistence type="evidence at transcript level"/>
<dbReference type="EC" id="2.7.10.1"/>
<dbReference type="EMBL" id="AF153446">
    <property type="protein sequence ID" value="AAD41890.1"/>
    <property type="molecule type" value="mRNA"/>
</dbReference>
<dbReference type="EMBL" id="AL691516">
    <property type="protein sequence ID" value="CAD43458.1"/>
    <property type="molecule type" value="Genomic_DNA"/>
</dbReference>
<dbReference type="EMBL" id="BX248242">
    <property type="protein sequence ID" value="CAD43458.1"/>
    <property type="status" value="JOINED"/>
    <property type="molecule type" value="Genomic_DNA"/>
</dbReference>
<dbReference type="EMBL" id="BX248242">
    <property type="protein sequence ID" value="CAI11525.1"/>
    <property type="molecule type" value="Genomic_DNA"/>
</dbReference>
<dbReference type="EMBL" id="AL691516">
    <property type="protein sequence ID" value="CAI11525.1"/>
    <property type="status" value="JOINED"/>
    <property type="molecule type" value="Genomic_DNA"/>
</dbReference>
<dbReference type="EMBL" id="BX276114">
    <property type="protein sequence ID" value="CAI11666.1"/>
    <property type="molecule type" value="Genomic_DNA"/>
</dbReference>
<dbReference type="RefSeq" id="NP_571128.1">
    <property type="nucleotide sequence ID" value="NM_131053.1"/>
</dbReference>
<dbReference type="SMR" id="Q8JFR5"/>
<dbReference type="FunCoup" id="Q8JFR5">
    <property type="interactions" value="1372"/>
</dbReference>
<dbReference type="STRING" id="7955.ENSDARP00000099069"/>
<dbReference type="GlyCosmos" id="Q8JFR5">
    <property type="glycosylation" value="8 sites, No reported glycans"/>
</dbReference>
<dbReference type="PaxDb" id="7955-ENSDARP00000099069"/>
<dbReference type="ABCD" id="Q8JFR5">
    <property type="antibodies" value="1 sequenced antibody"/>
</dbReference>
<dbReference type="Ensembl" id="ENSDART00000011135">
    <property type="protein sequence ID" value="ENSDARP00000024170"/>
    <property type="gene ID" value="ENSDARG00000043317"/>
</dbReference>
<dbReference type="GeneID" id="30256"/>
<dbReference type="KEGG" id="dre:30256"/>
<dbReference type="AGR" id="ZFIN:ZDB-GENE-980526-464"/>
<dbReference type="CTD" id="30256"/>
<dbReference type="ZFIN" id="ZDB-GENE-980526-464">
    <property type="gene designation" value="kita"/>
</dbReference>
<dbReference type="eggNOG" id="KOG0200">
    <property type="taxonomic scope" value="Eukaryota"/>
</dbReference>
<dbReference type="HOGENOM" id="CLU_000288_49_0_1"/>
<dbReference type="InParanoid" id="Q8JFR5"/>
<dbReference type="OrthoDB" id="6077854at2759"/>
<dbReference type="Reactome" id="R-DRE-1257604">
    <property type="pathway name" value="PIP3 activates AKT signaling"/>
</dbReference>
<dbReference type="Reactome" id="R-DRE-1433557">
    <property type="pathway name" value="Signaling by SCF-KIT"/>
</dbReference>
<dbReference type="Reactome" id="R-DRE-1433559">
    <property type="pathway name" value="Regulation of KIT signaling"/>
</dbReference>
<dbReference type="Reactome" id="R-DRE-5673001">
    <property type="pathway name" value="RAF/MAP kinase cascade"/>
</dbReference>
<dbReference type="Reactome" id="R-DRE-6811558">
    <property type="pathway name" value="PI5P, PP2A and IER3 Regulate PI3K/AKT Signaling"/>
</dbReference>
<dbReference type="Reactome" id="R-DRE-9856649">
    <property type="pathway name" value="Transcriptional and post-translational regulation of MITF-M expression and activity"/>
</dbReference>
<dbReference type="SignaLink" id="Q8JFR5"/>
<dbReference type="PRO" id="PR:Q8JFR5"/>
<dbReference type="Proteomes" id="UP000000437">
    <property type="component" value="Chromosome 20"/>
</dbReference>
<dbReference type="Bgee" id="ENSDARG00000043317">
    <property type="expression patterns" value="Expressed in pigment cell and 45 other cell types or tissues"/>
</dbReference>
<dbReference type="ExpressionAtlas" id="Q8JFR5">
    <property type="expression patterns" value="baseline and differential"/>
</dbReference>
<dbReference type="GO" id="GO:0005886">
    <property type="term" value="C:plasma membrane"/>
    <property type="evidence" value="ECO:0000318"/>
    <property type="project" value="GO_Central"/>
</dbReference>
<dbReference type="GO" id="GO:0043235">
    <property type="term" value="C:receptor complex"/>
    <property type="evidence" value="ECO:0000318"/>
    <property type="project" value="GO_Central"/>
</dbReference>
<dbReference type="GO" id="GO:0005524">
    <property type="term" value="F:ATP binding"/>
    <property type="evidence" value="ECO:0007669"/>
    <property type="project" value="UniProtKB-KW"/>
</dbReference>
<dbReference type="GO" id="GO:0019955">
    <property type="term" value="F:cytokine binding"/>
    <property type="evidence" value="ECO:0007669"/>
    <property type="project" value="InterPro"/>
</dbReference>
<dbReference type="GO" id="GO:0019838">
    <property type="term" value="F:growth factor binding"/>
    <property type="evidence" value="ECO:0000318"/>
    <property type="project" value="GO_Central"/>
</dbReference>
<dbReference type="GO" id="GO:0046872">
    <property type="term" value="F:metal ion binding"/>
    <property type="evidence" value="ECO:0007669"/>
    <property type="project" value="UniProtKB-KW"/>
</dbReference>
<dbReference type="GO" id="GO:0004714">
    <property type="term" value="F:transmembrane receptor protein tyrosine kinase activity"/>
    <property type="evidence" value="ECO:0000318"/>
    <property type="project" value="GO_Central"/>
</dbReference>
<dbReference type="GO" id="GO:0030183">
    <property type="term" value="P:B cell differentiation"/>
    <property type="evidence" value="ECO:0000318"/>
    <property type="project" value="GO_Central"/>
</dbReference>
<dbReference type="GO" id="GO:0016477">
    <property type="term" value="P:cell migration"/>
    <property type="evidence" value="ECO:0000318"/>
    <property type="project" value="GO_Central"/>
</dbReference>
<dbReference type="GO" id="GO:0048066">
    <property type="term" value="P:developmental pigmentation"/>
    <property type="evidence" value="ECO:0000315"/>
    <property type="project" value="ZFIN"/>
</dbReference>
<dbReference type="GO" id="GO:0038093">
    <property type="term" value="P:Fc receptor signaling pathway"/>
    <property type="evidence" value="ECO:0007669"/>
    <property type="project" value="InterPro"/>
</dbReference>
<dbReference type="GO" id="GO:0014831">
    <property type="term" value="P:gastro-intestinal system smooth muscle contraction"/>
    <property type="evidence" value="ECO:0000315"/>
    <property type="project" value="ZFIN"/>
</dbReference>
<dbReference type="GO" id="GO:0002244">
    <property type="term" value="P:hematopoietic progenitor cell differentiation"/>
    <property type="evidence" value="ECO:0000318"/>
    <property type="project" value="GO_Central"/>
</dbReference>
<dbReference type="GO" id="GO:0038109">
    <property type="term" value="P:Kit signaling pathway"/>
    <property type="evidence" value="ECO:0000318"/>
    <property type="project" value="GO_Central"/>
</dbReference>
<dbReference type="GO" id="GO:1902362">
    <property type="term" value="P:melanocyte apoptotic process"/>
    <property type="evidence" value="ECO:0000315"/>
    <property type="project" value="ZFIN"/>
</dbReference>
<dbReference type="GO" id="GO:0030318">
    <property type="term" value="P:melanocyte differentiation"/>
    <property type="evidence" value="ECO:0000315"/>
    <property type="project" value="ZFIN"/>
</dbReference>
<dbReference type="GO" id="GO:0097324">
    <property type="term" value="P:melanocyte migration"/>
    <property type="evidence" value="ECO:0000315"/>
    <property type="project" value="ZFIN"/>
</dbReference>
<dbReference type="GO" id="GO:0043473">
    <property type="term" value="P:pigmentation"/>
    <property type="evidence" value="ECO:0000315"/>
    <property type="project" value="ZFIN"/>
</dbReference>
<dbReference type="GO" id="GO:0030335">
    <property type="term" value="P:positive regulation of cell migration"/>
    <property type="evidence" value="ECO:0000318"/>
    <property type="project" value="GO_Central"/>
</dbReference>
<dbReference type="GO" id="GO:0008284">
    <property type="term" value="P:positive regulation of cell population proliferation"/>
    <property type="evidence" value="ECO:0000318"/>
    <property type="project" value="GO_Central"/>
</dbReference>
<dbReference type="GO" id="GO:0046427">
    <property type="term" value="P:positive regulation of receptor signaling pathway via JAK-STAT"/>
    <property type="evidence" value="ECO:0000318"/>
    <property type="project" value="GO_Central"/>
</dbReference>
<dbReference type="GO" id="GO:0048865">
    <property type="term" value="P:stem cell fate commitment"/>
    <property type="evidence" value="ECO:0000315"/>
    <property type="project" value="ZFIN"/>
</dbReference>
<dbReference type="CDD" id="cd05860">
    <property type="entry name" value="IgI_4_SCFR"/>
    <property type="match status" value="1"/>
</dbReference>
<dbReference type="CDD" id="cd05104">
    <property type="entry name" value="PTKc_Kit"/>
    <property type="match status" value="1"/>
</dbReference>
<dbReference type="FunFam" id="1.10.510.10:FF:000177">
    <property type="entry name" value="Mast/stem cell growth factor receptor"/>
    <property type="match status" value="1"/>
</dbReference>
<dbReference type="FunFam" id="2.60.40.10:FF:003340">
    <property type="entry name" value="Mast/stem cell growth factor receptor kita"/>
    <property type="match status" value="1"/>
</dbReference>
<dbReference type="FunFam" id="3.30.200.20:FF:000025">
    <property type="entry name" value="Platelet-derived growth factor receptor alpha"/>
    <property type="match status" value="1"/>
</dbReference>
<dbReference type="Gene3D" id="2.60.40.10">
    <property type="entry name" value="Immunoglobulins"/>
    <property type="match status" value="5"/>
</dbReference>
<dbReference type="Gene3D" id="3.30.200.20">
    <property type="entry name" value="Phosphorylase Kinase, domain 1"/>
    <property type="match status" value="1"/>
</dbReference>
<dbReference type="Gene3D" id="1.10.510.10">
    <property type="entry name" value="Transferase(Phosphotransferase) domain 1"/>
    <property type="match status" value="1"/>
</dbReference>
<dbReference type="InterPro" id="IPR007110">
    <property type="entry name" value="Ig-like_dom"/>
</dbReference>
<dbReference type="InterPro" id="IPR036179">
    <property type="entry name" value="Ig-like_dom_sf"/>
</dbReference>
<dbReference type="InterPro" id="IPR013783">
    <property type="entry name" value="Ig-like_fold"/>
</dbReference>
<dbReference type="InterPro" id="IPR003599">
    <property type="entry name" value="Ig_sub"/>
</dbReference>
<dbReference type="InterPro" id="IPR003598">
    <property type="entry name" value="Ig_sub2"/>
</dbReference>
<dbReference type="InterPro" id="IPR011009">
    <property type="entry name" value="Kinase-like_dom_sf"/>
</dbReference>
<dbReference type="InterPro" id="IPR000719">
    <property type="entry name" value="Prot_kinase_dom"/>
</dbReference>
<dbReference type="InterPro" id="IPR017441">
    <property type="entry name" value="Protein_kinase_ATP_BS"/>
</dbReference>
<dbReference type="InterPro" id="IPR050122">
    <property type="entry name" value="RTK"/>
</dbReference>
<dbReference type="InterPro" id="IPR027263">
    <property type="entry name" value="SCGF_receptor"/>
</dbReference>
<dbReference type="InterPro" id="IPR001245">
    <property type="entry name" value="Ser-Thr/Tyr_kinase_cat_dom"/>
</dbReference>
<dbReference type="InterPro" id="IPR008266">
    <property type="entry name" value="Tyr_kinase_AS"/>
</dbReference>
<dbReference type="InterPro" id="IPR020635">
    <property type="entry name" value="Tyr_kinase_cat_dom"/>
</dbReference>
<dbReference type="InterPro" id="IPR001824">
    <property type="entry name" value="Tyr_kinase_rcpt_3_CS"/>
</dbReference>
<dbReference type="PANTHER" id="PTHR24416:SF46">
    <property type="entry name" value="MAST_STEM CELL GROWTH FACTOR RECEPTOR KIT"/>
    <property type="match status" value="1"/>
</dbReference>
<dbReference type="PANTHER" id="PTHR24416">
    <property type="entry name" value="TYROSINE-PROTEIN KINASE RECEPTOR"/>
    <property type="match status" value="1"/>
</dbReference>
<dbReference type="Pfam" id="PF13927">
    <property type="entry name" value="Ig_3"/>
    <property type="match status" value="1"/>
</dbReference>
<dbReference type="Pfam" id="PF25305">
    <property type="entry name" value="Ig_PDGFR_d4"/>
    <property type="match status" value="1"/>
</dbReference>
<dbReference type="Pfam" id="PF07714">
    <property type="entry name" value="PK_Tyr_Ser-Thr"/>
    <property type="match status" value="1"/>
</dbReference>
<dbReference type="PIRSF" id="PIRSF500951">
    <property type="entry name" value="SCGF_recepter"/>
    <property type="match status" value="1"/>
</dbReference>
<dbReference type="PIRSF" id="PIRSF000615">
    <property type="entry name" value="TyrPK_CSF1-R"/>
    <property type="match status" value="1"/>
</dbReference>
<dbReference type="PRINTS" id="PR01832">
    <property type="entry name" value="VEGFRECEPTOR"/>
</dbReference>
<dbReference type="SMART" id="SM00409">
    <property type="entry name" value="IG"/>
    <property type="match status" value="4"/>
</dbReference>
<dbReference type="SMART" id="SM00408">
    <property type="entry name" value="IGc2"/>
    <property type="match status" value="3"/>
</dbReference>
<dbReference type="SMART" id="SM00220">
    <property type="entry name" value="S_TKc"/>
    <property type="match status" value="1"/>
</dbReference>
<dbReference type="SMART" id="SM00219">
    <property type="entry name" value="TyrKc"/>
    <property type="match status" value="1"/>
</dbReference>
<dbReference type="SUPFAM" id="SSF48726">
    <property type="entry name" value="Immunoglobulin"/>
    <property type="match status" value="4"/>
</dbReference>
<dbReference type="SUPFAM" id="SSF56112">
    <property type="entry name" value="Protein kinase-like (PK-like)"/>
    <property type="match status" value="1"/>
</dbReference>
<dbReference type="PROSITE" id="PS50835">
    <property type="entry name" value="IG_LIKE"/>
    <property type="match status" value="2"/>
</dbReference>
<dbReference type="PROSITE" id="PS00107">
    <property type="entry name" value="PROTEIN_KINASE_ATP"/>
    <property type="match status" value="1"/>
</dbReference>
<dbReference type="PROSITE" id="PS50011">
    <property type="entry name" value="PROTEIN_KINASE_DOM"/>
    <property type="match status" value="1"/>
</dbReference>
<dbReference type="PROSITE" id="PS00109">
    <property type="entry name" value="PROTEIN_KINASE_TYR"/>
    <property type="match status" value="1"/>
</dbReference>
<dbReference type="PROSITE" id="PS00240">
    <property type="entry name" value="RECEPTOR_TYR_KIN_III"/>
    <property type="match status" value="1"/>
</dbReference>
<name>KITA_DANRE</name>
<organism>
    <name type="scientific">Danio rerio</name>
    <name type="common">Zebrafish</name>
    <name type="synonym">Brachydanio rerio</name>
    <dbReference type="NCBI Taxonomy" id="7955"/>
    <lineage>
        <taxon>Eukaryota</taxon>
        <taxon>Metazoa</taxon>
        <taxon>Chordata</taxon>
        <taxon>Craniata</taxon>
        <taxon>Vertebrata</taxon>
        <taxon>Euteleostomi</taxon>
        <taxon>Actinopterygii</taxon>
        <taxon>Neopterygii</taxon>
        <taxon>Teleostei</taxon>
        <taxon>Ostariophysi</taxon>
        <taxon>Cypriniformes</taxon>
        <taxon>Danionidae</taxon>
        <taxon>Danioninae</taxon>
        <taxon>Danio</taxon>
    </lineage>
</organism>
<comment type="function">
    <text evidence="7">Tyrosine-protein kinase that acts as a cell-surface receptor for the cytokine kitlg/scf and plays a role in the regulation of cell survival and proliferation, hematopoiesis, stem cell maintenance, gametogenesis, and in mast cell development, migration and function. Required for the migration of cells in the melanocyte lineage and the survival of embryonic melanocytes. Required for the differentiation of some, but not all, melanocytes. Not essential for hematopoiesis or primordial germ cell development.</text>
</comment>
<comment type="catalytic activity">
    <reaction evidence="5">
        <text>L-tyrosyl-[protein] + ATP = O-phospho-L-tyrosyl-[protein] + ADP + H(+)</text>
        <dbReference type="Rhea" id="RHEA:10596"/>
        <dbReference type="Rhea" id="RHEA-COMP:10136"/>
        <dbReference type="Rhea" id="RHEA-COMP:20101"/>
        <dbReference type="ChEBI" id="CHEBI:15378"/>
        <dbReference type="ChEBI" id="CHEBI:30616"/>
        <dbReference type="ChEBI" id="CHEBI:46858"/>
        <dbReference type="ChEBI" id="CHEBI:61978"/>
        <dbReference type="ChEBI" id="CHEBI:456216"/>
        <dbReference type="EC" id="2.7.10.1"/>
    </reaction>
</comment>
<comment type="subcellular location">
    <subcellularLocation>
        <location evidence="1">Cell membrane</location>
        <topology evidence="1">Single-pass type I membrane protein</topology>
    </subcellularLocation>
</comment>
<comment type="tissue specificity">
    <text evidence="7">Expressed in cells of the neural crest-melanocyte lineage. In the embryo, also expressed in mesodermal cells that give rise to hematopoietic precursors, notochord, neural crest-derived cells of the branchial arches, pineal gland, retina and mechanoreceptive sensory cells of lateral line neuromasts. Not detected in primordial germ cells or larval gut.</text>
</comment>
<comment type="PTM">
    <text evidence="1">Ubiquitinated. Rapidly ubiquitinated after autophosphorylation induced by kitlg/scf binding, leading to internalization and degradation.</text>
</comment>
<comment type="PTM">
    <text evidence="1">Autophosphorylated on tyrosine residues. Phosphorylated tyrosine residues are important for interaction with specific binding partners (By similarity).</text>
</comment>
<comment type="disruption phenotype">
    <text evidence="7">Defects in the number and distribution of melanocytes.</text>
</comment>
<comment type="similarity">
    <text evidence="4">Belongs to the protein kinase superfamily. Tyr protein kinase family. CSF-1/PDGF receptor subfamily.</text>
</comment>
<accession>Q8JFR5</accession>
<accession>Q5RID5</accession>
<accession>Q9W755</accession>
<evidence type="ECO:0000250" key="1"/>
<evidence type="ECO:0000255" key="2"/>
<evidence type="ECO:0000255" key="3">
    <source>
        <dbReference type="PROSITE-ProRule" id="PRU00114"/>
    </source>
</evidence>
<evidence type="ECO:0000255" key="4">
    <source>
        <dbReference type="PROSITE-ProRule" id="PRU00159"/>
    </source>
</evidence>
<evidence type="ECO:0000255" key="5">
    <source>
        <dbReference type="PROSITE-ProRule" id="PRU10028"/>
    </source>
</evidence>
<evidence type="ECO:0000256" key="6">
    <source>
        <dbReference type="SAM" id="MobiDB-lite"/>
    </source>
</evidence>
<evidence type="ECO:0000269" key="7">
    <source>
    </source>
</evidence>
<evidence type="ECO:0000305" key="8"/>
<gene>
    <name type="primary">kita</name>
    <name type="synonym">kit</name>
    <name type="synonym">sparse</name>
</gene>
<protein>
    <recommendedName>
        <fullName>Mast/stem cell growth factor receptor kita</fullName>
        <shortName>SCFR</shortName>
        <ecNumber>2.7.10.1</ecNumber>
    </recommendedName>
    <alternativeName>
        <fullName>Tyrosine-protein kinase Kit</fullName>
    </alternativeName>
</protein>